<reference key="1">
    <citation type="journal article" date="1988" name="Nucleic Acids Res.">
        <title>Complete nucleotide sequence of gene for sex-specific storage protein of Bombyx mori.</title>
        <authorList>
            <person name="Sakurai H."/>
            <person name="Fujii T."/>
            <person name="Izumi S."/>
            <person name="Tomino S."/>
        </authorList>
    </citation>
    <scope>NUCLEOTIDE SEQUENCE [GENOMIC DNA]</scope>
    <source>
        <strain>Tokai X Asahi</strain>
        <tissue>Fat body</tissue>
    </source>
</reference>
<reference key="2">
    <citation type="journal article" date="1988" name="J. Biol. Chem.">
        <title>Structure and expression of gene coding for sex-specific storage protein of Bombyx mori.</title>
        <authorList>
            <person name="Sakurai H."/>
            <person name="Fujii T."/>
            <person name="Izumi S."/>
            <person name="Tomino S."/>
        </authorList>
    </citation>
    <scope>NUCLEOTIDE SEQUENCE [GENOMIC DNA] OF 1-112</scope>
</reference>
<feature type="signal peptide">
    <location>
        <begin position="1"/>
        <end position="15"/>
    </location>
</feature>
<feature type="chain" id="PRO_0000013340" description="Sex-specific storage-protein 1">
    <location>
        <begin position="16"/>
        <end position="747"/>
    </location>
</feature>
<feature type="glycosylation site" description="N-linked (GlcNAc...) asparagine" evidence="1">
    <location>
        <position position="494"/>
    </location>
</feature>
<feature type="glycosylation site" description="N-linked (GlcNAc...) asparagine" evidence="1">
    <location>
        <position position="706"/>
    </location>
</feature>
<comment type="function">
    <text>Larval storage protein (LSP) which may serve as a store of amino acids for synthesis of adult proteins.</text>
</comment>
<comment type="subcellular location">
    <subcellularLocation>
        <location>Secreted</location>
        <location>Extracellular space</location>
    </subcellularLocation>
</comment>
<comment type="tissue specificity">
    <text>Fat body.</text>
</comment>
<comment type="similarity">
    <text evidence="2">Belongs to the hemocyanin family.</text>
</comment>
<proteinExistence type="evidence at transcript level"/>
<accession>P09179</accession>
<name>SSP1_BOMMO</name>
<dbReference type="EMBL" id="X12978">
    <property type="protein sequence ID" value="CAA31417.1"/>
    <property type="molecule type" value="Genomic_DNA"/>
</dbReference>
<dbReference type="PIR" id="S01918">
    <property type="entry name" value="S01918"/>
</dbReference>
<dbReference type="SMR" id="P09179"/>
<dbReference type="FunCoup" id="P09179">
    <property type="interactions" value="8"/>
</dbReference>
<dbReference type="STRING" id="7091.P09179"/>
<dbReference type="GlyCosmos" id="P09179">
    <property type="glycosylation" value="2 sites, No reported glycans"/>
</dbReference>
<dbReference type="PaxDb" id="7091-BGIBMGA011266-TA"/>
<dbReference type="eggNOG" id="ENOG502QR98">
    <property type="taxonomic scope" value="Eukaryota"/>
</dbReference>
<dbReference type="HOGENOM" id="CLU_012213_1_0_1"/>
<dbReference type="InParanoid" id="P09179"/>
<dbReference type="Proteomes" id="UP000005204">
    <property type="component" value="Unassembled WGS sequence"/>
</dbReference>
<dbReference type="GO" id="GO:0005576">
    <property type="term" value="C:extracellular region"/>
    <property type="evidence" value="ECO:0007669"/>
    <property type="project" value="UniProtKB-SubCell"/>
</dbReference>
<dbReference type="GO" id="GO:0045735">
    <property type="term" value="F:nutrient reservoir activity"/>
    <property type="evidence" value="ECO:0007669"/>
    <property type="project" value="UniProtKB-KW"/>
</dbReference>
<dbReference type="Gene3D" id="1.10.1280.10">
    <property type="entry name" value="Di-copper center containing domain from catechol oxidase"/>
    <property type="match status" value="1"/>
</dbReference>
<dbReference type="Gene3D" id="2.60.40.1520">
    <property type="entry name" value="Hemocyanin, C-terminal domain"/>
    <property type="match status" value="1"/>
</dbReference>
<dbReference type="Gene3D" id="1.20.1370.10">
    <property type="entry name" value="Hemocyanin, N-terminal domain"/>
    <property type="match status" value="1"/>
</dbReference>
<dbReference type="InterPro" id="IPR008922">
    <property type="entry name" value="Di-copper_centre_dom_sf"/>
</dbReference>
<dbReference type="InterPro" id="IPR013788">
    <property type="entry name" value="Hemocyanin/hexamerin"/>
</dbReference>
<dbReference type="InterPro" id="IPR000896">
    <property type="entry name" value="Hemocyanin/hexamerin_mid_dom"/>
</dbReference>
<dbReference type="InterPro" id="IPR005203">
    <property type="entry name" value="Hemocyanin_C"/>
</dbReference>
<dbReference type="InterPro" id="IPR037020">
    <property type="entry name" value="Hemocyanin_C_sf"/>
</dbReference>
<dbReference type="InterPro" id="IPR005204">
    <property type="entry name" value="Hemocyanin_N"/>
</dbReference>
<dbReference type="InterPro" id="IPR036697">
    <property type="entry name" value="Hemocyanin_N_sf"/>
</dbReference>
<dbReference type="InterPro" id="IPR014756">
    <property type="entry name" value="Ig_E-set"/>
</dbReference>
<dbReference type="PANTHER" id="PTHR11511:SF5">
    <property type="entry name" value="FAT-BODY PROTEIN 1-RELATED"/>
    <property type="match status" value="1"/>
</dbReference>
<dbReference type="PANTHER" id="PTHR11511">
    <property type="entry name" value="LARVAL STORAGE PROTEIN/PHENOLOXIDASE"/>
    <property type="match status" value="1"/>
</dbReference>
<dbReference type="Pfam" id="PF03723">
    <property type="entry name" value="Hemocyanin_C"/>
    <property type="match status" value="1"/>
</dbReference>
<dbReference type="Pfam" id="PF00372">
    <property type="entry name" value="Hemocyanin_M"/>
    <property type="match status" value="1"/>
</dbReference>
<dbReference type="Pfam" id="PF03722">
    <property type="entry name" value="Hemocyanin_N"/>
    <property type="match status" value="1"/>
</dbReference>
<dbReference type="PRINTS" id="PR00187">
    <property type="entry name" value="HAEMOCYANIN"/>
</dbReference>
<dbReference type="SUPFAM" id="SSF48056">
    <property type="entry name" value="Di-copper centre-containing domain"/>
    <property type="match status" value="1"/>
</dbReference>
<dbReference type="SUPFAM" id="SSF81296">
    <property type="entry name" value="E set domains"/>
    <property type="match status" value="1"/>
</dbReference>
<dbReference type="SUPFAM" id="SSF48050">
    <property type="entry name" value="Hemocyanin, N-terminal domain"/>
    <property type="match status" value="1"/>
</dbReference>
<dbReference type="PROSITE" id="PS00209">
    <property type="entry name" value="HEMOCYANIN_1"/>
    <property type="match status" value="1"/>
</dbReference>
<dbReference type="PROSITE" id="PS00210">
    <property type="entry name" value="HEMOCYANIN_2"/>
    <property type="match status" value="1"/>
</dbReference>
<sequence length="747" mass="87242">MRVLVLLACLAAASASAISGGYGTMVFTKEPMVNLDMKMKELCIMKLLDHILQPTMFEDIKEIAKEYNIEKSCDKYMNVDVVKQFMEMYKMGMLPRGETFVHTNELQMEEAVKVFRVLYYAKDFDVFMRTACWMRERINGGMFVYAFTAACFHRTDCKGLYLPAPYEIYPYFFVDSHVISKAFMMKMTKAAKDPVLWKYYGITVTDDNLVVIDWRKGVRRSLSQNDVMSYFMEDVDLNTYMYYLHMNYPFWMTDDAYGINKERRGEIMMYANQQLLARMRLERLSHKMCDVKPMMWNEPLETGYWPKIRLPSGDEMPVRQNNMVVATKDNLKMKQMMDDVEMMIREGILTGKIERRDGTVISLKKSEDIENLARLVLGGLEIVGDDAKVIHLTNLMKKMLSYGQYNMDKYTYVPTSLDMYTTCLRDPVFWMIMKRVCNIFTVFKNMLPKYTREQFSFPGVKVEKITTDELVTFVDEYDMDISNAMYLDATEMQNKTSDMTFMARMRRLNHHPFQVSIDVMSDKTVDAVVRIFLGPKYDCMGRLMSVNDKRLDMFELDSFMYKLVNGKNTIVRSSMDMQGFIPEYLSTRRVMESEMMPSGDGQTMVKDWWCKSRNGFPQRLMLPLGTIGGLEMQMYVIVSPVRTGMLLPTLDMTMMKDRCACRWSSCISTMPLGYPFDRPIDMASFFTSNMKFADVMIYRKDLGMSNTSKTVDTSEMVMMKDDLTYLDSDMLVKRTYKDVMMMSSMMN</sequence>
<evidence type="ECO:0000255" key="1"/>
<evidence type="ECO:0000305" key="2"/>
<protein>
    <recommendedName>
        <fullName>Sex-specific storage-protein 1</fullName>
        <shortName>SP 1</shortName>
    </recommendedName>
    <alternativeName>
        <fullName>Methionine-rich storage protein</fullName>
    </alternativeName>
</protein>
<organism>
    <name type="scientific">Bombyx mori</name>
    <name type="common">Silk moth</name>
    <dbReference type="NCBI Taxonomy" id="7091"/>
    <lineage>
        <taxon>Eukaryota</taxon>
        <taxon>Metazoa</taxon>
        <taxon>Ecdysozoa</taxon>
        <taxon>Arthropoda</taxon>
        <taxon>Hexapoda</taxon>
        <taxon>Insecta</taxon>
        <taxon>Pterygota</taxon>
        <taxon>Neoptera</taxon>
        <taxon>Endopterygota</taxon>
        <taxon>Lepidoptera</taxon>
        <taxon>Glossata</taxon>
        <taxon>Ditrysia</taxon>
        <taxon>Bombycoidea</taxon>
        <taxon>Bombycidae</taxon>
        <taxon>Bombycinae</taxon>
        <taxon>Bombyx</taxon>
    </lineage>
</organism>
<gene>
    <name type="primary">SP1</name>
</gene>
<keyword id="KW-0325">Glycoprotein</keyword>
<keyword id="KW-1185">Reference proteome</keyword>
<keyword id="KW-0964">Secreted</keyword>
<keyword id="KW-0732">Signal</keyword>
<keyword id="KW-0758">Storage protein</keyword>